<feature type="chain" id="PRO_0000235540" description="Aspartate--tRNA(Asp/Asn) ligase">
    <location>
        <begin position="1"/>
        <end position="596"/>
    </location>
</feature>
<feature type="region of interest" description="Aspartate" evidence="1">
    <location>
        <begin position="206"/>
        <end position="209"/>
    </location>
</feature>
<feature type="binding site" evidence="1">
    <location>
        <position position="182"/>
    </location>
    <ligand>
        <name>L-aspartate</name>
        <dbReference type="ChEBI" id="CHEBI:29991"/>
    </ligand>
</feature>
<feature type="binding site" evidence="1">
    <location>
        <begin position="228"/>
        <end position="230"/>
    </location>
    <ligand>
        <name>ATP</name>
        <dbReference type="ChEBI" id="CHEBI:30616"/>
    </ligand>
</feature>
<feature type="binding site" evidence="1">
    <location>
        <position position="228"/>
    </location>
    <ligand>
        <name>L-aspartate</name>
        <dbReference type="ChEBI" id="CHEBI:29991"/>
    </ligand>
</feature>
<feature type="binding site" evidence="1">
    <location>
        <position position="237"/>
    </location>
    <ligand>
        <name>ATP</name>
        <dbReference type="ChEBI" id="CHEBI:30616"/>
    </ligand>
</feature>
<feature type="binding site" evidence="1">
    <location>
        <position position="456"/>
    </location>
    <ligand>
        <name>L-aspartate</name>
        <dbReference type="ChEBI" id="CHEBI:29991"/>
    </ligand>
</feature>
<feature type="binding site" evidence="1">
    <location>
        <position position="490"/>
    </location>
    <ligand>
        <name>ATP</name>
        <dbReference type="ChEBI" id="CHEBI:30616"/>
    </ligand>
</feature>
<feature type="binding site" evidence="1">
    <location>
        <position position="497"/>
    </location>
    <ligand>
        <name>L-aspartate</name>
        <dbReference type="ChEBI" id="CHEBI:29991"/>
    </ligand>
</feature>
<feature type="binding site" evidence="1">
    <location>
        <begin position="542"/>
        <end position="545"/>
    </location>
    <ligand>
        <name>ATP</name>
        <dbReference type="ChEBI" id="CHEBI:30616"/>
    </ligand>
</feature>
<feature type="site" description="Important for tRNA non-discrimination" evidence="1">
    <location>
        <position position="38"/>
    </location>
</feature>
<feature type="site" description="Important for tRNA non-discrimination" evidence="1">
    <location>
        <position position="90"/>
    </location>
</feature>
<evidence type="ECO:0000255" key="1">
    <source>
        <dbReference type="HAMAP-Rule" id="MF_00044"/>
    </source>
</evidence>
<name>SYDND_SYNC1</name>
<comment type="function">
    <text evidence="1">Aspartyl-tRNA synthetase with relaxed tRNA specificity since it is able to aspartylate not only its cognate tRNA(Asp) but also tRNA(Asn). Reaction proceeds in two steps: L-aspartate is first activated by ATP to form Asp-AMP and then transferred to the acceptor end of tRNA(Asp/Asn).</text>
</comment>
<comment type="catalytic activity">
    <reaction evidence="1">
        <text>tRNA(Asx) + L-aspartate + ATP = L-aspartyl-tRNA(Asx) + AMP + diphosphate</text>
        <dbReference type="Rhea" id="RHEA:18349"/>
        <dbReference type="Rhea" id="RHEA-COMP:9710"/>
        <dbReference type="Rhea" id="RHEA-COMP:9711"/>
        <dbReference type="ChEBI" id="CHEBI:29991"/>
        <dbReference type="ChEBI" id="CHEBI:30616"/>
        <dbReference type="ChEBI" id="CHEBI:33019"/>
        <dbReference type="ChEBI" id="CHEBI:78442"/>
        <dbReference type="ChEBI" id="CHEBI:78516"/>
        <dbReference type="ChEBI" id="CHEBI:456215"/>
        <dbReference type="EC" id="6.1.1.23"/>
    </reaction>
</comment>
<comment type="subunit">
    <text evidence="1">Homodimer.</text>
</comment>
<comment type="subcellular location">
    <subcellularLocation>
        <location evidence="1">Cytoplasm</location>
    </subcellularLocation>
</comment>
<comment type="similarity">
    <text evidence="1">Belongs to the class-II aminoacyl-tRNA synthetase family. Type 1 subfamily.</text>
</comment>
<reference key="1">
    <citation type="submission" date="2005-10" db="EMBL/GenBank/DDBJ databases">
        <title>Complete sequence of Pelobacter carbinolicus DSM 2380.</title>
        <authorList>
            <person name="Copeland A."/>
            <person name="Lucas S."/>
            <person name="Lapidus A."/>
            <person name="Barry K."/>
            <person name="Detter J.C."/>
            <person name="Glavina T."/>
            <person name="Hammon N."/>
            <person name="Israni S."/>
            <person name="Pitluck S."/>
            <person name="Chertkov O."/>
            <person name="Schmutz J."/>
            <person name="Larimer F."/>
            <person name="Land M."/>
            <person name="Kyrpides N."/>
            <person name="Ivanova N."/>
            <person name="Richardson P."/>
        </authorList>
    </citation>
    <scope>NUCLEOTIDE SEQUENCE [LARGE SCALE GENOMIC DNA]</scope>
    <source>
        <strain>DSM 2380 / NBRC 103641 / GraBd1</strain>
    </source>
</reference>
<accession>Q3A5R7</accession>
<proteinExistence type="inferred from homology"/>
<dbReference type="EC" id="6.1.1.23" evidence="1"/>
<dbReference type="EMBL" id="CP000142">
    <property type="protein sequence ID" value="ABA88290.1"/>
    <property type="molecule type" value="Genomic_DNA"/>
</dbReference>
<dbReference type="RefSeq" id="WP_011340758.1">
    <property type="nucleotide sequence ID" value="NC_007498.2"/>
</dbReference>
<dbReference type="SMR" id="Q3A5R7"/>
<dbReference type="STRING" id="338963.Pcar_1040"/>
<dbReference type="KEGG" id="pca:Pcar_1040"/>
<dbReference type="eggNOG" id="COG0173">
    <property type="taxonomic scope" value="Bacteria"/>
</dbReference>
<dbReference type="HOGENOM" id="CLU_014330_3_2_7"/>
<dbReference type="OrthoDB" id="9801152at2"/>
<dbReference type="Proteomes" id="UP000002534">
    <property type="component" value="Chromosome"/>
</dbReference>
<dbReference type="GO" id="GO:0005737">
    <property type="term" value="C:cytoplasm"/>
    <property type="evidence" value="ECO:0007669"/>
    <property type="project" value="UniProtKB-SubCell"/>
</dbReference>
<dbReference type="GO" id="GO:0004815">
    <property type="term" value="F:aspartate-tRNA ligase activity"/>
    <property type="evidence" value="ECO:0007669"/>
    <property type="project" value="UniProtKB-UniRule"/>
</dbReference>
<dbReference type="GO" id="GO:0050560">
    <property type="term" value="F:aspartate-tRNA(Asn) ligase activity"/>
    <property type="evidence" value="ECO:0007669"/>
    <property type="project" value="UniProtKB-EC"/>
</dbReference>
<dbReference type="GO" id="GO:0005524">
    <property type="term" value="F:ATP binding"/>
    <property type="evidence" value="ECO:0007669"/>
    <property type="project" value="UniProtKB-UniRule"/>
</dbReference>
<dbReference type="GO" id="GO:0003676">
    <property type="term" value="F:nucleic acid binding"/>
    <property type="evidence" value="ECO:0007669"/>
    <property type="project" value="InterPro"/>
</dbReference>
<dbReference type="GO" id="GO:0006422">
    <property type="term" value="P:aspartyl-tRNA aminoacylation"/>
    <property type="evidence" value="ECO:0007669"/>
    <property type="project" value="UniProtKB-UniRule"/>
</dbReference>
<dbReference type="CDD" id="cd00777">
    <property type="entry name" value="AspRS_core"/>
    <property type="match status" value="1"/>
</dbReference>
<dbReference type="CDD" id="cd04317">
    <property type="entry name" value="EcAspRS_like_N"/>
    <property type="match status" value="1"/>
</dbReference>
<dbReference type="Gene3D" id="3.30.930.10">
    <property type="entry name" value="Bira Bifunctional Protein, Domain 2"/>
    <property type="match status" value="1"/>
</dbReference>
<dbReference type="Gene3D" id="3.30.1360.30">
    <property type="entry name" value="GAD-like domain"/>
    <property type="match status" value="1"/>
</dbReference>
<dbReference type="Gene3D" id="2.40.50.140">
    <property type="entry name" value="Nucleic acid-binding proteins"/>
    <property type="match status" value="1"/>
</dbReference>
<dbReference type="HAMAP" id="MF_00044">
    <property type="entry name" value="Asp_tRNA_synth_type1"/>
    <property type="match status" value="1"/>
</dbReference>
<dbReference type="InterPro" id="IPR004364">
    <property type="entry name" value="Aa-tRNA-synt_II"/>
</dbReference>
<dbReference type="InterPro" id="IPR006195">
    <property type="entry name" value="aa-tRNA-synth_II"/>
</dbReference>
<dbReference type="InterPro" id="IPR045864">
    <property type="entry name" value="aa-tRNA-synth_II/BPL/LPL"/>
</dbReference>
<dbReference type="InterPro" id="IPR004524">
    <property type="entry name" value="Asp-tRNA-ligase_1"/>
</dbReference>
<dbReference type="InterPro" id="IPR047089">
    <property type="entry name" value="Asp-tRNA-ligase_1_N"/>
</dbReference>
<dbReference type="InterPro" id="IPR002312">
    <property type="entry name" value="Asp/Asn-tRNA-synth_IIb"/>
</dbReference>
<dbReference type="InterPro" id="IPR047090">
    <property type="entry name" value="AspRS_core"/>
</dbReference>
<dbReference type="InterPro" id="IPR004115">
    <property type="entry name" value="GAD-like_sf"/>
</dbReference>
<dbReference type="InterPro" id="IPR029351">
    <property type="entry name" value="GAD_dom"/>
</dbReference>
<dbReference type="InterPro" id="IPR012340">
    <property type="entry name" value="NA-bd_OB-fold"/>
</dbReference>
<dbReference type="InterPro" id="IPR004365">
    <property type="entry name" value="NA-bd_OB_tRNA"/>
</dbReference>
<dbReference type="NCBIfam" id="TIGR00459">
    <property type="entry name" value="aspS_bact"/>
    <property type="match status" value="1"/>
</dbReference>
<dbReference type="NCBIfam" id="NF001750">
    <property type="entry name" value="PRK00476.1"/>
    <property type="match status" value="1"/>
</dbReference>
<dbReference type="PANTHER" id="PTHR22594:SF5">
    <property type="entry name" value="ASPARTATE--TRNA LIGASE, MITOCHONDRIAL"/>
    <property type="match status" value="1"/>
</dbReference>
<dbReference type="PANTHER" id="PTHR22594">
    <property type="entry name" value="ASPARTYL/LYSYL-TRNA SYNTHETASE"/>
    <property type="match status" value="1"/>
</dbReference>
<dbReference type="Pfam" id="PF02938">
    <property type="entry name" value="GAD"/>
    <property type="match status" value="1"/>
</dbReference>
<dbReference type="Pfam" id="PF00152">
    <property type="entry name" value="tRNA-synt_2"/>
    <property type="match status" value="1"/>
</dbReference>
<dbReference type="Pfam" id="PF01336">
    <property type="entry name" value="tRNA_anti-codon"/>
    <property type="match status" value="1"/>
</dbReference>
<dbReference type="PRINTS" id="PR01042">
    <property type="entry name" value="TRNASYNTHASP"/>
</dbReference>
<dbReference type="SUPFAM" id="SSF55681">
    <property type="entry name" value="Class II aaRS and biotin synthetases"/>
    <property type="match status" value="1"/>
</dbReference>
<dbReference type="SUPFAM" id="SSF55261">
    <property type="entry name" value="GAD domain-like"/>
    <property type="match status" value="1"/>
</dbReference>
<dbReference type="SUPFAM" id="SSF50249">
    <property type="entry name" value="Nucleic acid-binding proteins"/>
    <property type="match status" value="1"/>
</dbReference>
<dbReference type="PROSITE" id="PS50862">
    <property type="entry name" value="AA_TRNA_LIGASE_II"/>
    <property type="match status" value="1"/>
</dbReference>
<keyword id="KW-0030">Aminoacyl-tRNA synthetase</keyword>
<keyword id="KW-0067">ATP-binding</keyword>
<keyword id="KW-0963">Cytoplasm</keyword>
<keyword id="KW-0436">Ligase</keyword>
<keyword id="KW-0547">Nucleotide-binding</keyword>
<keyword id="KW-0648">Protein biosynthesis</keyword>
<keyword id="KW-1185">Reference proteome</keyword>
<sequence length="596" mass="66661">MIDILGDWKRSHFCGSITAADTGKEVCLMGWVQRRRDHGGLIFIDLRDRQGIAQLALDPDRDPEAHAKAERVRNEYVVAVRGIVSARPEGTVNPKMATGEVEVEVKELRMLNGAETPPFLIEDNVDVAENIRLKHRYLDLRRPALQSNLVLRHKVAQIVRNYLNDTGFIEVETPVLTKSTPEGARDYLVPSRVNPGMFYALPQSPQLFKQLLMVSGFDRYYQIVKCFRDEDLRADRQPEFTQIDCELSFVDRQDIMDIMEAMIATVFQQILGIELSLPMPRITYTESMARFGVDNPDMRFDLELVEISNIAKDCGFKVFADAVKKGGIVKLLNAKQCASFSRKEIDDLTDFVKIYGAKGLAYVKIQEDGSWQSPIAKFFTEKEIALIDEAAGSEPGDLLLFAADTFKVANESLGRLRGHLGQKLGLARKDDFRFAWVTDFPLLEWDGEARRHVAVHHPFTAPLDEDIALLDGDPGSARAKAYDLVLNGSEIGGGSIRIHNREIQNKMFSLMGITAEEAEEKFGFLLGALSYGAPPHGGIAFGLDRLMMILTGSDSIRDVIAFPKTQKATCLLSEAPGAVDDKQLRELSIRRAVRNN</sequence>
<organism>
    <name type="scientific">Syntrophotalea carbinolica (strain DSM 2380 / NBRC 103641 / GraBd1)</name>
    <name type="common">Pelobacter carbinolicus</name>
    <dbReference type="NCBI Taxonomy" id="338963"/>
    <lineage>
        <taxon>Bacteria</taxon>
        <taxon>Pseudomonadati</taxon>
        <taxon>Thermodesulfobacteriota</taxon>
        <taxon>Desulfuromonadia</taxon>
        <taxon>Desulfuromonadales</taxon>
        <taxon>Syntrophotaleaceae</taxon>
        <taxon>Syntrophotalea</taxon>
    </lineage>
</organism>
<protein>
    <recommendedName>
        <fullName evidence="1">Aspartate--tRNA(Asp/Asn) ligase</fullName>
        <ecNumber evidence="1">6.1.1.23</ecNumber>
    </recommendedName>
    <alternativeName>
        <fullName evidence="1">Aspartyl-tRNA synthetase</fullName>
        <shortName evidence="1">AspRS</shortName>
    </alternativeName>
    <alternativeName>
        <fullName evidence="1">Non-discriminating aspartyl-tRNA synthetase</fullName>
        <shortName evidence="1">ND-AspRS</shortName>
    </alternativeName>
</protein>
<gene>
    <name evidence="1" type="primary">aspS</name>
    <name type="ordered locus">Pcar_1040</name>
</gene>